<feature type="chain" id="PRO_1000184356" description="ATP synthase subunit c">
    <location>
        <begin position="1"/>
        <end position="82"/>
    </location>
</feature>
<feature type="transmembrane region" description="Helical" evidence="1">
    <location>
        <begin position="7"/>
        <end position="27"/>
    </location>
</feature>
<feature type="transmembrane region" description="Helical" evidence="1">
    <location>
        <begin position="53"/>
        <end position="73"/>
    </location>
</feature>
<feature type="site" description="Reversibly protonated during proton transport" evidence="1">
    <location>
        <position position="60"/>
    </location>
</feature>
<comment type="function">
    <text evidence="1">F(1)F(0) ATP synthase produces ATP from ADP in the presence of a proton or sodium gradient. F-type ATPases consist of two structural domains, F(1) containing the extramembraneous catalytic core and F(0) containing the membrane proton channel, linked together by a central stalk and a peripheral stalk. During catalysis, ATP synthesis in the catalytic domain of F(1) is coupled via a rotary mechanism of the central stalk subunits to proton translocation.</text>
</comment>
<comment type="function">
    <text evidence="1">Key component of the F(0) channel; it plays a direct role in translocation across the membrane. A homomeric c-ring of between 10-14 subunits forms the central stalk rotor element with the F(1) delta and epsilon subunits.</text>
</comment>
<comment type="subunit">
    <text evidence="1">F-type ATPases have 2 components, F(1) - the catalytic core - and F(0) - the membrane proton channel. F(1) has five subunits: alpha(3), beta(3), gamma(1), delta(1), epsilon(1). F(0) has three main subunits: a(1), b(2) and c(10-14). The alpha and beta chains form an alternating ring which encloses part of the gamma chain. F(1) is attached to F(0) by a central stalk formed by the gamma and epsilon chains, while a peripheral stalk is formed by the delta and b chains.</text>
</comment>
<comment type="subcellular location">
    <subcellularLocation>
        <location evidence="1">Cell inner membrane</location>
        <topology evidence="1">Multi-pass membrane protein</topology>
    </subcellularLocation>
</comment>
<comment type="similarity">
    <text evidence="1">Belongs to the ATPase C chain family.</text>
</comment>
<keyword id="KW-0066">ATP synthesis</keyword>
<keyword id="KW-0997">Cell inner membrane</keyword>
<keyword id="KW-1003">Cell membrane</keyword>
<keyword id="KW-0138">CF(0)</keyword>
<keyword id="KW-0375">Hydrogen ion transport</keyword>
<keyword id="KW-0406">Ion transport</keyword>
<keyword id="KW-0446">Lipid-binding</keyword>
<keyword id="KW-0472">Membrane</keyword>
<keyword id="KW-1185">Reference proteome</keyword>
<keyword id="KW-0812">Transmembrane</keyword>
<keyword id="KW-1133">Transmembrane helix</keyword>
<keyword id="KW-0813">Transport</keyword>
<accession>A9BPU2</accession>
<organism>
    <name type="scientific">Delftia acidovorans (strain DSM 14801 / SPH-1)</name>
    <dbReference type="NCBI Taxonomy" id="398578"/>
    <lineage>
        <taxon>Bacteria</taxon>
        <taxon>Pseudomonadati</taxon>
        <taxon>Pseudomonadota</taxon>
        <taxon>Betaproteobacteria</taxon>
        <taxon>Burkholderiales</taxon>
        <taxon>Comamonadaceae</taxon>
        <taxon>Delftia</taxon>
    </lineage>
</organism>
<gene>
    <name evidence="1" type="primary">atpE</name>
    <name type="ordered locus">Daci_0415</name>
</gene>
<proteinExistence type="inferred from homology"/>
<dbReference type="EMBL" id="CP000884">
    <property type="protein sequence ID" value="ABX33061.1"/>
    <property type="molecule type" value="Genomic_DNA"/>
</dbReference>
<dbReference type="RefSeq" id="WP_011803767.1">
    <property type="nucleotide sequence ID" value="NC_010002.1"/>
</dbReference>
<dbReference type="SMR" id="A9BPU2"/>
<dbReference type="STRING" id="398578.Daci_0415"/>
<dbReference type="GeneID" id="94689759"/>
<dbReference type="KEGG" id="dac:Daci_0415"/>
<dbReference type="eggNOG" id="ENOG5032S3K">
    <property type="taxonomic scope" value="Bacteria"/>
</dbReference>
<dbReference type="HOGENOM" id="CLU_148047_1_0_4"/>
<dbReference type="Proteomes" id="UP000000784">
    <property type="component" value="Chromosome"/>
</dbReference>
<dbReference type="GO" id="GO:0005886">
    <property type="term" value="C:plasma membrane"/>
    <property type="evidence" value="ECO:0007669"/>
    <property type="project" value="UniProtKB-SubCell"/>
</dbReference>
<dbReference type="GO" id="GO:0045259">
    <property type="term" value="C:proton-transporting ATP synthase complex"/>
    <property type="evidence" value="ECO:0007669"/>
    <property type="project" value="UniProtKB-KW"/>
</dbReference>
<dbReference type="GO" id="GO:0033177">
    <property type="term" value="C:proton-transporting two-sector ATPase complex, proton-transporting domain"/>
    <property type="evidence" value="ECO:0007669"/>
    <property type="project" value="InterPro"/>
</dbReference>
<dbReference type="GO" id="GO:0008289">
    <property type="term" value="F:lipid binding"/>
    <property type="evidence" value="ECO:0007669"/>
    <property type="project" value="UniProtKB-KW"/>
</dbReference>
<dbReference type="GO" id="GO:0046933">
    <property type="term" value="F:proton-transporting ATP synthase activity, rotational mechanism"/>
    <property type="evidence" value="ECO:0007669"/>
    <property type="project" value="UniProtKB-UniRule"/>
</dbReference>
<dbReference type="CDD" id="cd18185">
    <property type="entry name" value="ATP-synt_Fo_c_ATPE"/>
    <property type="match status" value="1"/>
</dbReference>
<dbReference type="FunFam" id="1.20.20.10:FF:000002">
    <property type="entry name" value="ATP synthase subunit c"/>
    <property type="match status" value="1"/>
</dbReference>
<dbReference type="Gene3D" id="1.20.20.10">
    <property type="entry name" value="F1F0 ATP synthase subunit C"/>
    <property type="match status" value="1"/>
</dbReference>
<dbReference type="HAMAP" id="MF_01396">
    <property type="entry name" value="ATP_synth_c_bact"/>
    <property type="match status" value="1"/>
</dbReference>
<dbReference type="InterPro" id="IPR005953">
    <property type="entry name" value="ATP_synth_csu_bac/chlpt"/>
</dbReference>
<dbReference type="InterPro" id="IPR000454">
    <property type="entry name" value="ATP_synth_F0_csu"/>
</dbReference>
<dbReference type="InterPro" id="IPR020537">
    <property type="entry name" value="ATP_synth_F0_csu_DDCD_BS"/>
</dbReference>
<dbReference type="InterPro" id="IPR038662">
    <property type="entry name" value="ATP_synth_F0_csu_sf"/>
</dbReference>
<dbReference type="InterPro" id="IPR002379">
    <property type="entry name" value="ATPase_proteolipid_c-like_dom"/>
</dbReference>
<dbReference type="InterPro" id="IPR035921">
    <property type="entry name" value="F/V-ATP_Csub_sf"/>
</dbReference>
<dbReference type="NCBIfam" id="TIGR01260">
    <property type="entry name" value="ATP_synt_c"/>
    <property type="match status" value="1"/>
</dbReference>
<dbReference type="NCBIfam" id="NF005363">
    <property type="entry name" value="PRK06876.1"/>
    <property type="match status" value="1"/>
</dbReference>
<dbReference type="Pfam" id="PF00137">
    <property type="entry name" value="ATP-synt_C"/>
    <property type="match status" value="1"/>
</dbReference>
<dbReference type="PRINTS" id="PR00124">
    <property type="entry name" value="ATPASEC"/>
</dbReference>
<dbReference type="SUPFAM" id="SSF81333">
    <property type="entry name" value="F1F0 ATP synthase subunit C"/>
    <property type="match status" value="1"/>
</dbReference>
<dbReference type="PROSITE" id="PS00605">
    <property type="entry name" value="ATPASE_C"/>
    <property type="match status" value="1"/>
</dbReference>
<name>ATPL_DELAS</name>
<protein>
    <recommendedName>
        <fullName evidence="1">ATP synthase subunit c</fullName>
    </recommendedName>
    <alternativeName>
        <fullName evidence="1">ATP synthase F(0) sector subunit c</fullName>
    </alternativeName>
    <alternativeName>
        <fullName evidence="1">F-type ATPase subunit c</fullName>
        <shortName evidence="1">F-ATPase subunit c</shortName>
    </alternativeName>
    <alternativeName>
        <fullName evidence="1">Lipid-binding protein</fullName>
    </alternativeName>
</protein>
<evidence type="ECO:0000255" key="1">
    <source>
        <dbReference type="HAMAP-Rule" id="MF_01396"/>
    </source>
</evidence>
<reference key="1">
    <citation type="submission" date="2007-11" db="EMBL/GenBank/DDBJ databases">
        <title>Complete sequence of Delftia acidovorans DSM 14801 / SPH-1.</title>
        <authorList>
            <person name="Copeland A."/>
            <person name="Lucas S."/>
            <person name="Lapidus A."/>
            <person name="Barry K."/>
            <person name="Glavina del Rio T."/>
            <person name="Dalin E."/>
            <person name="Tice H."/>
            <person name="Pitluck S."/>
            <person name="Lowry S."/>
            <person name="Clum A."/>
            <person name="Schmutz J."/>
            <person name="Larimer F."/>
            <person name="Land M."/>
            <person name="Hauser L."/>
            <person name="Kyrpides N."/>
            <person name="Kim E."/>
            <person name="Schleheck D."/>
            <person name="Richardson P."/>
        </authorList>
    </citation>
    <scope>NUCLEOTIDE SEQUENCE [LARGE SCALE GENOMIC DNA]</scope>
    <source>
        <strain>DSM 14801 / SPH-1</strain>
    </source>
</reference>
<sequence>MENILGLVALACGLIVGLGAIGASIGIALMGGKFLESSARQPELINELQTKMFILAGLIDAAFLIGVAIALLFAFANPFVLA</sequence>